<proteinExistence type="inferred from homology"/>
<organism>
    <name type="scientific">Fagopyrum esculentum subsp. ancestrale</name>
    <name type="common">Wild buckwheat</name>
    <dbReference type="NCBI Taxonomy" id="180217"/>
    <lineage>
        <taxon>Eukaryota</taxon>
        <taxon>Viridiplantae</taxon>
        <taxon>Streptophyta</taxon>
        <taxon>Embryophyta</taxon>
        <taxon>Tracheophyta</taxon>
        <taxon>Spermatophyta</taxon>
        <taxon>Magnoliopsida</taxon>
        <taxon>eudicotyledons</taxon>
        <taxon>Gunneridae</taxon>
        <taxon>Pentapetalae</taxon>
        <taxon>Caryophyllales</taxon>
        <taxon>Polygonaceae</taxon>
        <taxon>Polygonoideae</taxon>
        <taxon>Fagopyreae</taxon>
        <taxon>Fagopyrum</taxon>
    </lineage>
</organism>
<name>PSAJ_FAGEA</name>
<comment type="function">
    <text evidence="1">May help in the organization of the PsaE and PsaF subunits.</text>
</comment>
<comment type="subcellular location">
    <subcellularLocation>
        <location evidence="1">Plastid</location>
        <location evidence="1">Chloroplast thylakoid membrane</location>
        <topology evidence="1">Single-pass membrane protein</topology>
    </subcellularLocation>
</comment>
<comment type="similarity">
    <text evidence="1">Belongs to the PsaJ family.</text>
</comment>
<keyword id="KW-0150">Chloroplast</keyword>
<keyword id="KW-0472">Membrane</keyword>
<keyword id="KW-0602">Photosynthesis</keyword>
<keyword id="KW-0603">Photosystem I</keyword>
<keyword id="KW-0934">Plastid</keyword>
<keyword id="KW-0793">Thylakoid</keyword>
<keyword id="KW-0812">Transmembrane</keyword>
<keyword id="KW-1133">Transmembrane helix</keyword>
<accession>B2XWM5</accession>
<gene>
    <name evidence="1" type="primary">psaJ</name>
</gene>
<protein>
    <recommendedName>
        <fullName evidence="1">Photosystem I reaction center subunit IX</fullName>
    </recommendedName>
    <alternativeName>
        <fullName evidence="1">PSI-J</fullName>
    </alternativeName>
</protein>
<geneLocation type="chloroplast"/>
<dbReference type="EMBL" id="EU254477">
    <property type="protein sequence ID" value="ABY79752.1"/>
    <property type="molecule type" value="Genomic_DNA"/>
</dbReference>
<dbReference type="RefSeq" id="YP_001936537.1">
    <property type="nucleotide sequence ID" value="NC_010776.1"/>
</dbReference>
<dbReference type="SMR" id="B2XWM5"/>
<dbReference type="GeneID" id="6335981"/>
<dbReference type="GO" id="GO:0009535">
    <property type="term" value="C:chloroplast thylakoid membrane"/>
    <property type="evidence" value="ECO:0007669"/>
    <property type="project" value="UniProtKB-SubCell"/>
</dbReference>
<dbReference type="GO" id="GO:0009522">
    <property type="term" value="C:photosystem I"/>
    <property type="evidence" value="ECO:0007669"/>
    <property type="project" value="UniProtKB-KW"/>
</dbReference>
<dbReference type="GO" id="GO:0015979">
    <property type="term" value="P:photosynthesis"/>
    <property type="evidence" value="ECO:0007669"/>
    <property type="project" value="UniProtKB-UniRule"/>
</dbReference>
<dbReference type="FunFam" id="1.20.5.510:FF:000001">
    <property type="entry name" value="Photosystem I reaction center subunit IX"/>
    <property type="match status" value="1"/>
</dbReference>
<dbReference type="Gene3D" id="1.20.5.510">
    <property type="entry name" value="Single helix bin"/>
    <property type="match status" value="1"/>
</dbReference>
<dbReference type="HAMAP" id="MF_00522">
    <property type="entry name" value="PSI_PsaJ"/>
    <property type="match status" value="1"/>
</dbReference>
<dbReference type="InterPro" id="IPR002615">
    <property type="entry name" value="PSI_PsaJ"/>
</dbReference>
<dbReference type="InterPro" id="IPR036062">
    <property type="entry name" value="PSI_PsaJ_sf"/>
</dbReference>
<dbReference type="PANTHER" id="PTHR36082">
    <property type="match status" value="1"/>
</dbReference>
<dbReference type="PANTHER" id="PTHR36082:SF2">
    <property type="entry name" value="PHOTOSYSTEM I REACTION CENTER SUBUNIT IX"/>
    <property type="match status" value="1"/>
</dbReference>
<dbReference type="Pfam" id="PF01701">
    <property type="entry name" value="PSI_PsaJ"/>
    <property type="match status" value="1"/>
</dbReference>
<dbReference type="SUPFAM" id="SSF81544">
    <property type="entry name" value="Subunit IX of photosystem I reaction centre, PsaJ"/>
    <property type="match status" value="1"/>
</dbReference>
<reference key="1">
    <citation type="journal article" date="2008" name="BMC Plant Biol.">
        <title>Comparative chloroplast genomics and phylogenetics of Fagopyrum esculentum ssp. ancestrale - a wild ancestor of cultivated buckwheat.</title>
        <authorList>
            <person name="Logacheva M.D."/>
            <person name="Samigullin T.H."/>
            <person name="Dhingra A."/>
            <person name="Penin A.A."/>
        </authorList>
    </citation>
    <scope>NUCLEOTIDE SEQUENCE [LARGE SCALE GENOMIC DNA]</scope>
</reference>
<feature type="chain" id="PRO_0000354147" description="Photosystem I reaction center subunit IX">
    <location>
        <begin position="1"/>
        <end position="44"/>
    </location>
</feature>
<feature type="transmembrane region" description="Helical" evidence="1">
    <location>
        <begin position="7"/>
        <end position="27"/>
    </location>
</feature>
<evidence type="ECO:0000255" key="1">
    <source>
        <dbReference type="HAMAP-Rule" id="MF_00522"/>
    </source>
</evidence>
<sequence length="44" mass="5042">MRNLKTYLSVAPVLSTLWFGSLAGLLIEINRFFPDALTFPFFSF</sequence>